<proteinExistence type="evidence at protein level"/>
<gene>
    <name evidence="5" type="primary">dpasF</name>
</gene>
<sequence length="473" mass="50300">MNRLLASALLVGSAVVAPVSAACIKNATVTEVDVAIIGGGASGVYAAARLIDNNKTVVVLERNADRIGGQTETYYDPTTGTPVNVGVKVFSNTTVTTDFLKRFDFPMGTLNVGQTLATGTQYVDFATGKLIPNFTAVVPAVQAAAMQRYAAELAKYPQIKFGYNLGPQVPEDLVLPFGKFMEKHNLTGMAQTMFEFNSGYTPLLEIPALYILKYLDTYELQSLQSGSFIVAANGDSATLYRNAAKFLGERVVYGVSGMHIQRSSAAGGRVTISVGNSTTGTHMIRAKKLIVAAPPTLDNLRSTGLDLDTTEAGLFGKLSAGVFYSLVVKDTGVAKANLRNRHPANPYGFPDQPFIYSVIPLPKTSGLAQVLLGSASPLTASQVEARVAADIGRLPASLRGNATSVPKVVTMAAHTWNVMAPVADIKAGFYDKLEGLQGLKDTWYIGAAWATQSSTTIWEGLEQEFLPKLLAAL</sequence>
<organism>
    <name type="scientific">Apiospora sacchari</name>
    <name type="common">Arthrinium sacchari</name>
    <dbReference type="NCBI Taxonomy" id="166626"/>
    <lineage>
        <taxon>Eukaryota</taxon>
        <taxon>Fungi</taxon>
        <taxon>Dikarya</taxon>
        <taxon>Ascomycota</taxon>
        <taxon>Pezizomycotina</taxon>
        <taxon>Sordariomycetes</taxon>
        <taxon>Xylariomycetidae</taxon>
        <taxon>Amphisphaeriales</taxon>
        <taxon>Apiosporaceae</taxon>
        <taxon>Apiospora</taxon>
    </lineage>
</organism>
<accession>P9WEX5</accession>
<name>DPASF_APISA</name>
<evidence type="ECO:0000250" key="1">
    <source>
        <dbReference type="UniProtKB" id="B8NI10"/>
    </source>
</evidence>
<evidence type="ECO:0000255" key="2"/>
<evidence type="ECO:0000255" key="3">
    <source>
        <dbReference type="PROSITE-ProRule" id="PRU00498"/>
    </source>
</evidence>
<evidence type="ECO:0000269" key="4">
    <source>
    </source>
</evidence>
<evidence type="ECO:0000303" key="5">
    <source>
    </source>
</evidence>
<evidence type="ECO:0000305" key="6"/>
<dbReference type="EC" id="1.1.1.-" evidence="4"/>
<dbReference type="SMR" id="P9WEX5"/>
<dbReference type="GlyCosmos" id="P9WEX5">
    <property type="glycosylation" value="7 sites, No reported glycans"/>
</dbReference>
<dbReference type="UniPathway" id="UPA00213"/>
<dbReference type="GO" id="GO:0016491">
    <property type="term" value="F:oxidoreductase activity"/>
    <property type="evidence" value="ECO:0007669"/>
    <property type="project" value="UniProtKB-KW"/>
</dbReference>
<dbReference type="GO" id="GO:0016114">
    <property type="term" value="P:terpenoid biosynthetic process"/>
    <property type="evidence" value="ECO:0007669"/>
    <property type="project" value="UniProtKB-UniPathway"/>
</dbReference>
<dbReference type="Gene3D" id="1.10.405.20">
    <property type="match status" value="1"/>
</dbReference>
<dbReference type="Gene3D" id="3.30.70.1990">
    <property type="match status" value="1"/>
</dbReference>
<dbReference type="Gene3D" id="3.50.50.60">
    <property type="entry name" value="FAD/NAD(P)-binding domain"/>
    <property type="match status" value="1"/>
</dbReference>
<dbReference type="InterPro" id="IPR036188">
    <property type="entry name" value="FAD/NAD-bd_sf"/>
</dbReference>
<dbReference type="Pfam" id="PF13450">
    <property type="entry name" value="NAD_binding_8"/>
    <property type="match status" value="1"/>
</dbReference>
<dbReference type="SUPFAM" id="SSF51905">
    <property type="entry name" value="FAD/NAD(P)-binding domain"/>
    <property type="match status" value="1"/>
</dbReference>
<protein>
    <recommendedName>
        <fullName evidence="5">FAD-dependent oxidoreductase dpasF</fullName>
        <ecNumber evidence="4">1.1.1.-</ecNumber>
    </recommendedName>
    <alternativeName>
        <fullName evidence="5">Diterpenoid pyrone biosynthesis cluster protein E</fullName>
    </alternativeName>
</protein>
<keyword id="KW-0274">FAD</keyword>
<keyword id="KW-0285">Flavoprotein</keyword>
<keyword id="KW-0325">Glycoprotein</keyword>
<keyword id="KW-0560">Oxidoreductase</keyword>
<keyword id="KW-0732">Signal</keyword>
<comment type="function">
    <text evidence="4">FAD-dependent oxidoreductase; part of the gene cluster that mediates the biosynthesis of the diterpenoid pyrones subglutinols A and B (PubMed:32286350). The first step of the pathway is the synthesis of the alpha-pyrone moiety by the polyketide synthase dpasA via condensation of one acetyl-CoA starter unit with 3 malonyl-CoA units and 2 methylations (PubMed:32286350). The alpha-pyrone is then combined with geranylgeranyl pyrophosphate (GGPP) formed by the GGPP synthase dpasD through the action of the prenyltransferase dpasC to yield a linear alpha-pyrone diterpenoid (PubMed:32286350). Subsequent steps in the diterpenoid pyrone biosynthetic pathway involve the decalin core formation, which is initiated by the epoxidation of the C10-C11 olefin by the FAD-dependent oxidoreductase dpasE, and is followed by a cyclization cascade catalyzed by the terpene cyclase dpasB (PubMed:32286350). The FAD-linked oxidoreductase dpasF is then involved in tetrahydrofuran (THF) ring formation at the C5 unit to complete the formation of subglutinols A and B (PubMed:32286350). DpasF possesses also an additional catalytic ability of multi-step oxidations to generate a new DDP analog with an enone system at the C5 named FDDP A (PubMed:32286350).</text>
</comment>
<comment type="cofactor">
    <cofactor evidence="1">
        <name>FAD</name>
        <dbReference type="ChEBI" id="CHEBI:57692"/>
    </cofactor>
</comment>
<comment type="pathway">
    <text evidence="4">Secondary metabolite biosynthesis; terpenoid biosynthesis.</text>
</comment>
<comment type="biotechnology">
    <text evidence="4">Diterpenoid pyrones display various biological activities and subglutinol A shows insecticidal and anti-HIV activities.</text>
</comment>
<comment type="similarity">
    <text evidence="6">Belongs to the beta-cyclopiazonate dehydrogenase family.</text>
</comment>
<feature type="signal peptide" evidence="2">
    <location>
        <begin position="1"/>
        <end position="21"/>
    </location>
</feature>
<feature type="chain" id="PRO_0000451747" description="FAD-dependent oxidoreductase dpasF">
    <location>
        <begin position="22"/>
        <end position="473"/>
    </location>
</feature>
<feature type="glycosylation site" description="N-linked (GlcNAc...) asparagine" evidence="3">
    <location>
        <position position="26"/>
    </location>
</feature>
<feature type="glycosylation site" description="N-linked (GlcNAc...) asparagine" evidence="3">
    <location>
        <position position="54"/>
    </location>
</feature>
<feature type="glycosylation site" description="N-linked (GlcNAc...) asparagine" evidence="3">
    <location>
        <position position="92"/>
    </location>
</feature>
<feature type="glycosylation site" description="N-linked (GlcNAc...) asparagine" evidence="3">
    <location>
        <position position="133"/>
    </location>
</feature>
<feature type="glycosylation site" description="N-linked (GlcNAc...) asparagine" evidence="3">
    <location>
        <position position="185"/>
    </location>
</feature>
<feature type="glycosylation site" description="N-linked (GlcNAc...) asparagine" evidence="3">
    <location>
        <position position="276"/>
    </location>
</feature>
<feature type="glycosylation site" description="N-linked (GlcNAc...) asparagine" evidence="3">
    <location>
        <position position="401"/>
    </location>
</feature>
<reference key="1">
    <citation type="journal article" date="2020" name="Nat. Commun.">
        <title>Synthetic biology based construction of biological activity-related library of fungal decalin-containing diterpenoid pyrones.</title>
        <authorList>
            <person name="Tsukada K."/>
            <person name="Shinki S."/>
            <person name="Kaneko A."/>
            <person name="Murakami K."/>
            <person name="Irie K."/>
            <person name="Murai M."/>
            <person name="Miyoshi H."/>
            <person name="Dan S."/>
            <person name="Kawaji K."/>
            <person name="Hayashi H."/>
            <person name="Kodama E.N."/>
            <person name="Hori A."/>
            <person name="Salim E."/>
            <person name="Kuraishi T."/>
            <person name="Hirata N."/>
            <person name="Kanda Y."/>
            <person name="Asai T."/>
        </authorList>
    </citation>
    <scope>NUCLEOTIDE SEQUENCE [GENOMIC DNA]</scope>
    <scope>FUNCTION</scope>
    <scope>CATALYTIC ACTIVITY</scope>
    <scope>PATHWAY</scope>
    <scope>BIOTECHNOLOGY</scope>
</reference>